<feature type="chain" id="PRO_0000121163" description="Ras-related protein RABA2c">
    <location>
        <begin position="1"/>
        <end position="217"/>
    </location>
</feature>
<feature type="region of interest" description="Disordered" evidence="3">
    <location>
        <begin position="195"/>
        <end position="217"/>
    </location>
</feature>
<feature type="short sequence motif" description="Effector region" evidence="1">
    <location>
        <begin position="41"/>
        <end position="49"/>
    </location>
</feature>
<feature type="binding site" evidence="2">
    <location>
        <begin position="19"/>
        <end position="27"/>
    </location>
    <ligand>
        <name>GTP</name>
        <dbReference type="ChEBI" id="CHEBI:37565"/>
    </ligand>
</feature>
<feature type="binding site" evidence="2">
    <location>
        <begin position="38"/>
        <end position="44"/>
    </location>
    <ligand>
        <name>GTP</name>
        <dbReference type="ChEBI" id="CHEBI:37565"/>
    </ligand>
</feature>
<feature type="binding site" evidence="2">
    <location>
        <begin position="67"/>
        <end position="71"/>
    </location>
    <ligand>
        <name>GTP</name>
        <dbReference type="ChEBI" id="CHEBI:37565"/>
    </ligand>
</feature>
<feature type="binding site" evidence="2">
    <location>
        <begin position="125"/>
        <end position="128"/>
    </location>
    <ligand>
        <name>GTP</name>
        <dbReference type="ChEBI" id="CHEBI:37565"/>
    </ligand>
</feature>
<feature type="binding site" evidence="2">
    <location>
        <begin position="155"/>
        <end position="157"/>
    </location>
    <ligand>
        <name>GTP</name>
        <dbReference type="ChEBI" id="CHEBI:37565"/>
    </ligand>
</feature>
<feature type="lipid moiety-binding region" description="S-geranylgeranyl cysteine" evidence="1">
    <location>
        <position position="214"/>
    </location>
</feature>
<feature type="lipid moiety-binding region" description="S-geranylgeranyl cysteine" evidence="1">
    <location>
        <position position="215"/>
    </location>
</feature>
<accession>Q96283</accession>
<dbReference type="EMBL" id="Y08904">
    <property type="protein sequence ID" value="CAA70112.1"/>
    <property type="molecule type" value="mRNA"/>
</dbReference>
<dbReference type="EMBL" id="AL096859">
    <property type="protein sequence ID" value="CAB51182.1"/>
    <property type="molecule type" value="Genomic_DNA"/>
</dbReference>
<dbReference type="EMBL" id="CP002686">
    <property type="protein sequence ID" value="AEE78209.1"/>
    <property type="molecule type" value="Genomic_DNA"/>
</dbReference>
<dbReference type="EMBL" id="CP002686">
    <property type="protein sequence ID" value="ANM65760.1"/>
    <property type="molecule type" value="Genomic_DNA"/>
</dbReference>
<dbReference type="EMBL" id="AY065380">
    <property type="protein sequence ID" value="AAL38821.1"/>
    <property type="molecule type" value="mRNA"/>
</dbReference>
<dbReference type="EMBL" id="AY096545">
    <property type="protein sequence ID" value="AAM20195.1"/>
    <property type="molecule type" value="mRNA"/>
</dbReference>
<dbReference type="EMBL" id="AY087450">
    <property type="protein sequence ID" value="AAM64996.1"/>
    <property type="molecule type" value="mRNA"/>
</dbReference>
<dbReference type="PIR" id="T12965">
    <property type="entry name" value="T12965"/>
</dbReference>
<dbReference type="RefSeq" id="NP_001327707.1">
    <property type="nucleotide sequence ID" value="NM_001339276.1"/>
</dbReference>
<dbReference type="RefSeq" id="NP_190267.1">
    <property type="nucleotide sequence ID" value="NM_114550.4"/>
</dbReference>
<dbReference type="SMR" id="Q96283"/>
<dbReference type="BioGRID" id="9156">
    <property type="interactions" value="6"/>
</dbReference>
<dbReference type="FunCoup" id="Q96283">
    <property type="interactions" value="3197"/>
</dbReference>
<dbReference type="IntAct" id="Q96283">
    <property type="interactions" value="5"/>
</dbReference>
<dbReference type="STRING" id="3702.Q96283"/>
<dbReference type="iPTMnet" id="Q96283"/>
<dbReference type="PaxDb" id="3702-AT3G46830.1"/>
<dbReference type="ProteomicsDB" id="236613"/>
<dbReference type="EnsemblPlants" id="AT3G46830.1">
    <property type="protein sequence ID" value="AT3G46830.1"/>
    <property type="gene ID" value="AT3G46830"/>
</dbReference>
<dbReference type="EnsemblPlants" id="AT3G46830.2">
    <property type="protein sequence ID" value="AT3G46830.2"/>
    <property type="gene ID" value="AT3G46830"/>
</dbReference>
<dbReference type="GeneID" id="823836"/>
<dbReference type="Gramene" id="AT3G46830.1">
    <property type="protein sequence ID" value="AT3G46830.1"/>
    <property type="gene ID" value="AT3G46830"/>
</dbReference>
<dbReference type="Gramene" id="AT3G46830.2">
    <property type="protein sequence ID" value="AT3G46830.2"/>
    <property type="gene ID" value="AT3G46830"/>
</dbReference>
<dbReference type="KEGG" id="ath:AT3G46830"/>
<dbReference type="Araport" id="AT3G46830"/>
<dbReference type="TAIR" id="AT3G46830">
    <property type="gene designation" value="RABA2C"/>
</dbReference>
<dbReference type="eggNOG" id="KOG0087">
    <property type="taxonomic scope" value="Eukaryota"/>
</dbReference>
<dbReference type="HOGENOM" id="CLU_041217_23_0_1"/>
<dbReference type="InParanoid" id="Q96283"/>
<dbReference type="OMA" id="DSPDMRK"/>
<dbReference type="OrthoDB" id="9989112at2759"/>
<dbReference type="PhylomeDB" id="Q96283"/>
<dbReference type="CD-CODE" id="4299E36E">
    <property type="entry name" value="Nucleolus"/>
</dbReference>
<dbReference type="PRO" id="PR:Q96283"/>
<dbReference type="Proteomes" id="UP000006548">
    <property type="component" value="Chromosome 3"/>
</dbReference>
<dbReference type="ExpressionAtlas" id="Q96283">
    <property type="expression patterns" value="baseline and differential"/>
</dbReference>
<dbReference type="GO" id="GO:0009504">
    <property type="term" value="C:cell plate"/>
    <property type="evidence" value="ECO:0000314"/>
    <property type="project" value="TAIR"/>
</dbReference>
<dbReference type="GO" id="GO:0005829">
    <property type="term" value="C:cytosol"/>
    <property type="evidence" value="ECO:0007005"/>
    <property type="project" value="TAIR"/>
</dbReference>
<dbReference type="GO" id="GO:0005768">
    <property type="term" value="C:endosome"/>
    <property type="evidence" value="ECO:0000314"/>
    <property type="project" value="TAIR"/>
</dbReference>
<dbReference type="GO" id="GO:0010008">
    <property type="term" value="C:endosome membrane"/>
    <property type="evidence" value="ECO:0007669"/>
    <property type="project" value="UniProtKB-SubCell"/>
</dbReference>
<dbReference type="GO" id="GO:0005794">
    <property type="term" value="C:Golgi apparatus"/>
    <property type="evidence" value="ECO:0007669"/>
    <property type="project" value="UniProtKB-SubCell"/>
</dbReference>
<dbReference type="GO" id="GO:0009506">
    <property type="term" value="C:plasmodesma"/>
    <property type="evidence" value="ECO:0007005"/>
    <property type="project" value="TAIR"/>
</dbReference>
<dbReference type="GO" id="GO:0005525">
    <property type="term" value="F:GTP binding"/>
    <property type="evidence" value="ECO:0007669"/>
    <property type="project" value="UniProtKB-KW"/>
</dbReference>
<dbReference type="GO" id="GO:0003924">
    <property type="term" value="F:GTPase activity"/>
    <property type="evidence" value="ECO:0007669"/>
    <property type="project" value="InterPro"/>
</dbReference>
<dbReference type="GO" id="GO:0015031">
    <property type="term" value="P:protein transport"/>
    <property type="evidence" value="ECO:0007669"/>
    <property type="project" value="UniProtKB-KW"/>
</dbReference>
<dbReference type="CDD" id="cd01868">
    <property type="entry name" value="Rab11_like"/>
    <property type="match status" value="1"/>
</dbReference>
<dbReference type="FunFam" id="3.40.50.300:FF:000067">
    <property type="entry name" value="ras-related protein RABA1f"/>
    <property type="match status" value="1"/>
</dbReference>
<dbReference type="Gene3D" id="3.40.50.300">
    <property type="entry name" value="P-loop containing nucleotide triphosphate hydrolases"/>
    <property type="match status" value="1"/>
</dbReference>
<dbReference type="InterPro" id="IPR027417">
    <property type="entry name" value="P-loop_NTPase"/>
</dbReference>
<dbReference type="InterPro" id="IPR050209">
    <property type="entry name" value="Rab_GTPases_membrane_traffic"/>
</dbReference>
<dbReference type="InterPro" id="IPR005225">
    <property type="entry name" value="Small_GTP-bd"/>
</dbReference>
<dbReference type="InterPro" id="IPR001806">
    <property type="entry name" value="Small_GTPase"/>
</dbReference>
<dbReference type="NCBIfam" id="TIGR00231">
    <property type="entry name" value="small_GTP"/>
    <property type="match status" value="1"/>
</dbReference>
<dbReference type="PANTHER" id="PTHR47979">
    <property type="entry name" value="DRAB11-RELATED"/>
    <property type="match status" value="1"/>
</dbReference>
<dbReference type="Pfam" id="PF00071">
    <property type="entry name" value="Ras"/>
    <property type="match status" value="1"/>
</dbReference>
<dbReference type="PRINTS" id="PR00449">
    <property type="entry name" value="RASTRNSFRMNG"/>
</dbReference>
<dbReference type="SMART" id="SM00177">
    <property type="entry name" value="ARF"/>
    <property type="match status" value="1"/>
</dbReference>
<dbReference type="SMART" id="SM00175">
    <property type="entry name" value="RAB"/>
    <property type="match status" value="1"/>
</dbReference>
<dbReference type="SMART" id="SM00176">
    <property type="entry name" value="RAN"/>
    <property type="match status" value="1"/>
</dbReference>
<dbReference type="SMART" id="SM00173">
    <property type="entry name" value="RAS"/>
    <property type="match status" value="1"/>
</dbReference>
<dbReference type="SMART" id="SM00174">
    <property type="entry name" value="RHO"/>
    <property type="match status" value="1"/>
</dbReference>
<dbReference type="SUPFAM" id="SSF52540">
    <property type="entry name" value="P-loop containing nucleoside triphosphate hydrolases"/>
    <property type="match status" value="1"/>
</dbReference>
<dbReference type="PROSITE" id="PS51419">
    <property type="entry name" value="RAB"/>
    <property type="match status" value="1"/>
</dbReference>
<comment type="function">
    <text evidence="1">Intracellular vesicle trafficking and protein transport.</text>
</comment>
<comment type="subcellular location">
    <subcellularLocation>
        <location evidence="4">Endosome membrane</location>
    </subcellularLocation>
    <subcellularLocation>
        <location evidence="6">Golgi apparatus</location>
        <location evidence="6">trans-Golgi network membrane</location>
        <topology evidence="6">Lipid-anchor</topology>
    </subcellularLocation>
    <text>During cytokinesis located to the growing margins of the cell plate.</text>
</comment>
<comment type="tissue specificity">
    <text evidence="4">Expressed in root tips.</text>
</comment>
<comment type="similarity">
    <text evidence="5">Belongs to the small GTPase superfamily. Rab family.</text>
</comment>
<name>RAA2C_ARATH</name>
<organism>
    <name type="scientific">Arabidopsis thaliana</name>
    <name type="common">Mouse-ear cress</name>
    <dbReference type="NCBI Taxonomy" id="3702"/>
    <lineage>
        <taxon>Eukaryota</taxon>
        <taxon>Viridiplantae</taxon>
        <taxon>Streptophyta</taxon>
        <taxon>Embryophyta</taxon>
        <taxon>Tracheophyta</taxon>
        <taxon>Spermatophyta</taxon>
        <taxon>Magnoliopsida</taxon>
        <taxon>eudicotyledons</taxon>
        <taxon>Gunneridae</taxon>
        <taxon>Pentapetalae</taxon>
        <taxon>rosids</taxon>
        <taxon>malvids</taxon>
        <taxon>Brassicales</taxon>
        <taxon>Brassicaceae</taxon>
        <taxon>Camelineae</taxon>
        <taxon>Arabidopsis</taxon>
    </lineage>
</organism>
<gene>
    <name type="primary">RABA2C</name>
    <name type="synonym">RAB11A</name>
    <name type="ordered locus">At3g46830</name>
    <name type="ORF">T6H20.140</name>
</gene>
<protein>
    <recommendedName>
        <fullName>Ras-related protein RABA2c</fullName>
        <shortName>AtRABA2c</shortName>
    </recommendedName>
    <alternativeName>
        <fullName>Ras-related protein Rab11A</fullName>
        <shortName>AtRab11A</shortName>
    </alternativeName>
</protein>
<proteinExistence type="evidence at transcript level"/>
<sequence>MTHRVDQEYDYLFKIVLIGDSGVGKSNILSRFTRNEFCLESKSTIGVEFATRTTQVEGKTIKAQIWDTAGQERYRAITSAYYRGAVGALLVYDITKRQTFDNVLRWLRELRDHADSNIVIMMAGNKSDLNHLRSVAEEDGQSLAEKEGLSFLETSALEATNVEKAFQTILGEIYHIISKKALAAQEAAAANSAIPGQGTTINVDDTSGGAKRACCSS</sequence>
<keyword id="KW-0967">Endosome</keyword>
<keyword id="KW-0333">Golgi apparatus</keyword>
<keyword id="KW-0342">GTP-binding</keyword>
<keyword id="KW-0449">Lipoprotein</keyword>
<keyword id="KW-0472">Membrane</keyword>
<keyword id="KW-0547">Nucleotide-binding</keyword>
<keyword id="KW-0636">Prenylation</keyword>
<keyword id="KW-0653">Protein transport</keyword>
<keyword id="KW-1185">Reference proteome</keyword>
<keyword id="KW-0813">Transport</keyword>
<evidence type="ECO:0000250" key="1"/>
<evidence type="ECO:0000250" key="2">
    <source>
        <dbReference type="UniProtKB" id="P62491"/>
    </source>
</evidence>
<evidence type="ECO:0000256" key="3">
    <source>
        <dbReference type="SAM" id="MobiDB-lite"/>
    </source>
</evidence>
<evidence type="ECO:0000269" key="4">
    <source>
    </source>
</evidence>
<evidence type="ECO:0000305" key="5"/>
<evidence type="ECO:0000305" key="6">
    <source>
    </source>
</evidence>
<reference key="1">
    <citation type="online journal article" date="1997" name="Plant Gene Register">
        <title>At-rab11A, a novel gene encoding a Rab GTPase in Arabidopsis.</title>
        <authorList>
            <person name="Lin Y.-Y."/>
            <person name="Lin B.-L."/>
        </authorList>
        <locator>PGR97-037</locator>
    </citation>
    <scope>NUCLEOTIDE SEQUENCE [MRNA]</scope>
    <source>
        <strain>cv. Columbia</strain>
    </source>
</reference>
<reference key="2">
    <citation type="journal article" date="2000" name="Nature">
        <title>Sequence and analysis of chromosome 3 of the plant Arabidopsis thaliana.</title>
        <authorList>
            <person name="Salanoubat M."/>
            <person name="Lemcke K."/>
            <person name="Rieger M."/>
            <person name="Ansorge W."/>
            <person name="Unseld M."/>
            <person name="Fartmann B."/>
            <person name="Valle G."/>
            <person name="Bloecker H."/>
            <person name="Perez-Alonso M."/>
            <person name="Obermaier B."/>
            <person name="Delseny M."/>
            <person name="Boutry M."/>
            <person name="Grivell L.A."/>
            <person name="Mache R."/>
            <person name="Puigdomenech P."/>
            <person name="De Simone V."/>
            <person name="Choisne N."/>
            <person name="Artiguenave F."/>
            <person name="Robert C."/>
            <person name="Brottier P."/>
            <person name="Wincker P."/>
            <person name="Cattolico L."/>
            <person name="Weissenbach J."/>
            <person name="Saurin W."/>
            <person name="Quetier F."/>
            <person name="Schaefer M."/>
            <person name="Mueller-Auer S."/>
            <person name="Gabel C."/>
            <person name="Fuchs M."/>
            <person name="Benes V."/>
            <person name="Wurmbach E."/>
            <person name="Drzonek H."/>
            <person name="Erfle H."/>
            <person name="Jordan N."/>
            <person name="Bangert S."/>
            <person name="Wiedelmann R."/>
            <person name="Kranz H."/>
            <person name="Voss H."/>
            <person name="Holland R."/>
            <person name="Brandt P."/>
            <person name="Nyakatura G."/>
            <person name="Vezzi A."/>
            <person name="D'Angelo M."/>
            <person name="Pallavicini A."/>
            <person name="Toppo S."/>
            <person name="Simionati B."/>
            <person name="Conrad A."/>
            <person name="Hornischer K."/>
            <person name="Kauer G."/>
            <person name="Loehnert T.-H."/>
            <person name="Nordsiek G."/>
            <person name="Reichelt J."/>
            <person name="Scharfe M."/>
            <person name="Schoen O."/>
            <person name="Bargues M."/>
            <person name="Terol J."/>
            <person name="Climent J."/>
            <person name="Navarro P."/>
            <person name="Collado C."/>
            <person name="Perez-Perez A."/>
            <person name="Ottenwaelder B."/>
            <person name="Duchemin D."/>
            <person name="Cooke R."/>
            <person name="Laudie M."/>
            <person name="Berger-Llauro C."/>
            <person name="Purnelle B."/>
            <person name="Masuy D."/>
            <person name="de Haan M."/>
            <person name="Maarse A.C."/>
            <person name="Alcaraz J.-P."/>
            <person name="Cottet A."/>
            <person name="Casacuberta E."/>
            <person name="Monfort A."/>
            <person name="Argiriou A."/>
            <person name="Flores M."/>
            <person name="Liguori R."/>
            <person name="Vitale D."/>
            <person name="Mannhaupt G."/>
            <person name="Haase D."/>
            <person name="Schoof H."/>
            <person name="Rudd S."/>
            <person name="Zaccaria P."/>
            <person name="Mewes H.-W."/>
            <person name="Mayer K.F.X."/>
            <person name="Kaul S."/>
            <person name="Town C.D."/>
            <person name="Koo H.L."/>
            <person name="Tallon L.J."/>
            <person name="Jenkins J."/>
            <person name="Rooney T."/>
            <person name="Rizzo M."/>
            <person name="Walts A."/>
            <person name="Utterback T."/>
            <person name="Fujii C.Y."/>
            <person name="Shea T.P."/>
            <person name="Creasy T.H."/>
            <person name="Haas B."/>
            <person name="Maiti R."/>
            <person name="Wu D."/>
            <person name="Peterson J."/>
            <person name="Van Aken S."/>
            <person name="Pai G."/>
            <person name="Militscher J."/>
            <person name="Sellers P."/>
            <person name="Gill J.E."/>
            <person name="Feldblyum T.V."/>
            <person name="Preuss D."/>
            <person name="Lin X."/>
            <person name="Nierman W.C."/>
            <person name="Salzberg S.L."/>
            <person name="White O."/>
            <person name="Venter J.C."/>
            <person name="Fraser C.M."/>
            <person name="Kaneko T."/>
            <person name="Nakamura Y."/>
            <person name="Sato S."/>
            <person name="Kato T."/>
            <person name="Asamizu E."/>
            <person name="Sasamoto S."/>
            <person name="Kimura T."/>
            <person name="Idesawa K."/>
            <person name="Kawashima K."/>
            <person name="Kishida Y."/>
            <person name="Kiyokawa C."/>
            <person name="Kohara M."/>
            <person name="Matsumoto M."/>
            <person name="Matsuno A."/>
            <person name="Muraki A."/>
            <person name="Nakayama S."/>
            <person name="Nakazaki N."/>
            <person name="Shinpo S."/>
            <person name="Takeuchi C."/>
            <person name="Wada T."/>
            <person name="Watanabe A."/>
            <person name="Yamada M."/>
            <person name="Yasuda M."/>
            <person name="Tabata S."/>
        </authorList>
    </citation>
    <scope>NUCLEOTIDE SEQUENCE [LARGE SCALE GENOMIC DNA]</scope>
    <source>
        <strain>cv. Columbia</strain>
    </source>
</reference>
<reference key="3">
    <citation type="journal article" date="2017" name="Plant J.">
        <title>Araport11: a complete reannotation of the Arabidopsis thaliana reference genome.</title>
        <authorList>
            <person name="Cheng C.Y."/>
            <person name="Krishnakumar V."/>
            <person name="Chan A.P."/>
            <person name="Thibaud-Nissen F."/>
            <person name="Schobel S."/>
            <person name="Town C.D."/>
        </authorList>
    </citation>
    <scope>GENOME REANNOTATION</scope>
    <source>
        <strain>cv. Columbia</strain>
    </source>
</reference>
<reference key="4">
    <citation type="journal article" date="2003" name="Science">
        <title>Empirical analysis of transcriptional activity in the Arabidopsis genome.</title>
        <authorList>
            <person name="Yamada K."/>
            <person name="Lim J."/>
            <person name="Dale J.M."/>
            <person name="Chen H."/>
            <person name="Shinn P."/>
            <person name="Palm C.J."/>
            <person name="Southwick A.M."/>
            <person name="Wu H.C."/>
            <person name="Kim C.J."/>
            <person name="Nguyen M."/>
            <person name="Pham P.K."/>
            <person name="Cheuk R.F."/>
            <person name="Karlin-Newmann G."/>
            <person name="Liu S.X."/>
            <person name="Lam B."/>
            <person name="Sakano H."/>
            <person name="Wu T."/>
            <person name="Yu G."/>
            <person name="Miranda M."/>
            <person name="Quach H.L."/>
            <person name="Tripp M."/>
            <person name="Chang C.H."/>
            <person name="Lee J.M."/>
            <person name="Toriumi M.J."/>
            <person name="Chan M.M."/>
            <person name="Tang C.C."/>
            <person name="Onodera C.S."/>
            <person name="Deng J.M."/>
            <person name="Akiyama K."/>
            <person name="Ansari Y."/>
            <person name="Arakawa T."/>
            <person name="Banh J."/>
            <person name="Banno F."/>
            <person name="Bowser L."/>
            <person name="Brooks S.Y."/>
            <person name="Carninci P."/>
            <person name="Chao Q."/>
            <person name="Choy N."/>
            <person name="Enju A."/>
            <person name="Goldsmith A.D."/>
            <person name="Gurjal M."/>
            <person name="Hansen N.F."/>
            <person name="Hayashizaki Y."/>
            <person name="Johnson-Hopson C."/>
            <person name="Hsuan V.W."/>
            <person name="Iida K."/>
            <person name="Karnes M."/>
            <person name="Khan S."/>
            <person name="Koesema E."/>
            <person name="Ishida J."/>
            <person name="Jiang P.X."/>
            <person name="Jones T."/>
            <person name="Kawai J."/>
            <person name="Kamiya A."/>
            <person name="Meyers C."/>
            <person name="Nakajima M."/>
            <person name="Narusaka M."/>
            <person name="Seki M."/>
            <person name="Sakurai T."/>
            <person name="Satou M."/>
            <person name="Tamse R."/>
            <person name="Vaysberg M."/>
            <person name="Wallender E.K."/>
            <person name="Wong C."/>
            <person name="Yamamura Y."/>
            <person name="Yuan S."/>
            <person name="Shinozaki K."/>
            <person name="Davis R.W."/>
            <person name="Theologis A."/>
            <person name="Ecker J.R."/>
        </authorList>
    </citation>
    <scope>NUCLEOTIDE SEQUENCE [LARGE SCALE MRNA]</scope>
    <source>
        <strain>cv. Columbia</strain>
    </source>
</reference>
<reference key="5">
    <citation type="submission" date="2002-03" db="EMBL/GenBank/DDBJ databases">
        <title>Full-length cDNA from Arabidopsis thaliana.</title>
        <authorList>
            <person name="Brover V.V."/>
            <person name="Troukhan M.E."/>
            <person name="Alexandrov N.A."/>
            <person name="Lu Y.-P."/>
            <person name="Flavell R.B."/>
            <person name="Feldmann K.A."/>
        </authorList>
    </citation>
    <scope>NUCLEOTIDE SEQUENCE [LARGE SCALE MRNA]</scope>
</reference>
<reference key="6">
    <citation type="journal article" date="2003" name="Plant Physiol.">
        <title>Analysis of the small GTPase gene superfamily of Arabidopsis.</title>
        <authorList>
            <person name="Vernoud V."/>
            <person name="Horton A.C."/>
            <person name="Yang Z."/>
            <person name="Nielsen E."/>
        </authorList>
    </citation>
    <scope>GENE FAMILY</scope>
    <scope>NOMENCLATURE</scope>
</reference>
<reference key="7">
    <citation type="journal article" date="2008" name="Plant Cell">
        <title>Rab-A2 and Rab-A3 GTPases define a trans-Golgi endosomal membrane domain in Arabidopsis that contributes substantially to the cell plate.</title>
        <authorList>
            <person name="Chow C.M."/>
            <person name="Neto H."/>
            <person name="Foucart C."/>
            <person name="Moore I."/>
        </authorList>
    </citation>
    <scope>SUBCELLULAR LOCATION</scope>
    <scope>TISSUE SPECIFICITY</scope>
</reference>